<organism>
    <name type="scientific">Natronomonas pharaonis (strain ATCC 35678 / DSM 2160 / CIP 103997 / JCM 8858 / NBRC 14720 / NCIMB 2260 / Gabara)</name>
    <name type="common">Halobacterium pharaonis</name>
    <dbReference type="NCBI Taxonomy" id="348780"/>
    <lineage>
        <taxon>Archaea</taxon>
        <taxon>Methanobacteriati</taxon>
        <taxon>Methanobacteriota</taxon>
        <taxon>Stenosarchaea group</taxon>
        <taxon>Halobacteria</taxon>
        <taxon>Halobacteriales</taxon>
        <taxon>Haloarculaceae</taxon>
        <taxon>Natronomonas</taxon>
    </lineage>
</organism>
<dbReference type="EC" id="3.1.26.5" evidence="1"/>
<dbReference type="EMBL" id="CR936257">
    <property type="protein sequence ID" value="CAI49954.1"/>
    <property type="molecule type" value="Genomic_DNA"/>
</dbReference>
<dbReference type="RefSeq" id="WP_011323571.1">
    <property type="nucleotide sequence ID" value="NC_007426.1"/>
</dbReference>
<dbReference type="SMR" id="Q3IPJ7"/>
<dbReference type="STRING" id="348780.NP_3726A"/>
<dbReference type="EnsemblBacteria" id="CAI49954">
    <property type="protein sequence ID" value="CAI49954"/>
    <property type="gene ID" value="NP_3726A"/>
</dbReference>
<dbReference type="GeneID" id="3703114"/>
<dbReference type="KEGG" id="nph:NP_3726A"/>
<dbReference type="eggNOG" id="arCOG00307">
    <property type="taxonomic scope" value="Archaea"/>
</dbReference>
<dbReference type="HOGENOM" id="CLU_074509_1_0_2"/>
<dbReference type="OrthoDB" id="85765at2157"/>
<dbReference type="Proteomes" id="UP000002698">
    <property type="component" value="Chromosome"/>
</dbReference>
<dbReference type="GO" id="GO:0005737">
    <property type="term" value="C:cytoplasm"/>
    <property type="evidence" value="ECO:0007669"/>
    <property type="project" value="UniProtKB-SubCell"/>
</dbReference>
<dbReference type="GO" id="GO:0030677">
    <property type="term" value="C:ribonuclease P complex"/>
    <property type="evidence" value="ECO:0007669"/>
    <property type="project" value="UniProtKB-UniRule"/>
</dbReference>
<dbReference type="GO" id="GO:0004526">
    <property type="term" value="F:ribonuclease P activity"/>
    <property type="evidence" value="ECO:0007669"/>
    <property type="project" value="UniProtKB-UniRule"/>
</dbReference>
<dbReference type="GO" id="GO:0001682">
    <property type="term" value="P:tRNA 5'-leader removal"/>
    <property type="evidence" value="ECO:0007669"/>
    <property type="project" value="UniProtKB-UniRule"/>
</dbReference>
<dbReference type="Gene3D" id="3.20.20.140">
    <property type="entry name" value="Metal-dependent hydrolases"/>
    <property type="match status" value="1"/>
</dbReference>
<dbReference type="HAMAP" id="MF_00756">
    <property type="entry name" value="RNase_P_3"/>
    <property type="match status" value="1"/>
</dbReference>
<dbReference type="InterPro" id="IPR016195">
    <property type="entry name" value="Pol/histidinol_Pase-like"/>
</dbReference>
<dbReference type="InterPro" id="IPR023539">
    <property type="entry name" value="RNase_P_comp-3_arc"/>
</dbReference>
<dbReference type="InterPro" id="IPR002738">
    <property type="entry name" value="RNase_P_p30"/>
</dbReference>
<dbReference type="Pfam" id="PF01876">
    <property type="entry name" value="RNase_P_p30"/>
    <property type="match status" value="1"/>
</dbReference>
<dbReference type="SUPFAM" id="SSF89550">
    <property type="entry name" value="PHP domain-like"/>
    <property type="match status" value="1"/>
</dbReference>
<evidence type="ECO:0000255" key="1">
    <source>
        <dbReference type="HAMAP-Rule" id="MF_00756"/>
    </source>
</evidence>
<keyword id="KW-0963">Cytoplasm</keyword>
<keyword id="KW-0255">Endonuclease</keyword>
<keyword id="KW-0378">Hydrolase</keyword>
<keyword id="KW-0540">Nuclease</keyword>
<keyword id="KW-1185">Reference proteome</keyword>
<keyword id="KW-0819">tRNA processing</keyword>
<proteinExistence type="inferred from homology"/>
<protein>
    <recommendedName>
        <fullName evidence="1">Ribonuclease P protein component 3</fullName>
        <shortName evidence="1">RNase P component 3</shortName>
        <ecNumber evidence="1">3.1.26.5</ecNumber>
    </recommendedName>
    <alternativeName>
        <fullName evidence="1">Rpp30</fullName>
    </alternativeName>
</protein>
<sequence length="236" mass="25695">MYEGVHAHPDGNATVARFAETAASRGYDGIVVRNHGDAQTDYDADAVAAEYGVEVVSGIEIRTDDTAQASGLVGNYRSKRDIVCVHGGELNRFAVEEPKVDVLAHPMRDGDVNHVLAKAAAENGVHFEFNFGRVLRADGGKRVQAIQGLRKLRELVDQYDAPYVVSADPESHLELRSSRDLAAVGETVGFDREAITDGLAAWADIVERNRRRRSAAVVEPGVRIERADGETDDSRE</sequence>
<feature type="chain" id="PRO_1000046630" description="Ribonuclease P protein component 3">
    <location>
        <begin position="1"/>
        <end position="236"/>
    </location>
</feature>
<accession>Q3IPJ7</accession>
<name>RNP3_NATPD</name>
<reference key="1">
    <citation type="journal article" date="2005" name="Genome Res.">
        <title>Living with two extremes: conclusions from the genome sequence of Natronomonas pharaonis.</title>
        <authorList>
            <person name="Falb M."/>
            <person name="Pfeiffer F."/>
            <person name="Palm P."/>
            <person name="Rodewald K."/>
            <person name="Hickmann V."/>
            <person name="Tittor J."/>
            <person name="Oesterhelt D."/>
        </authorList>
    </citation>
    <scope>NUCLEOTIDE SEQUENCE [LARGE SCALE GENOMIC DNA]</scope>
    <source>
        <strain>ATCC 35678 / DSM 2160 / CIP 103997 / JCM 8858 / NBRC 14720 / NCIMB 2260 / Gabara</strain>
    </source>
</reference>
<gene>
    <name evidence="1" type="primary">rnp3</name>
    <name type="ordered locus">NP_3726A</name>
</gene>
<comment type="function">
    <text evidence="1">Part of ribonuclease P, a protein complex that generates mature tRNA molecules by cleaving their 5'-ends.</text>
</comment>
<comment type="catalytic activity">
    <reaction evidence="1">
        <text>Endonucleolytic cleavage of RNA, removing 5'-extranucleotides from tRNA precursor.</text>
        <dbReference type="EC" id="3.1.26.5"/>
    </reaction>
</comment>
<comment type="subunit">
    <text evidence="1">Consists of a catalytic RNA component and at least 4-5 protein subunits.</text>
</comment>
<comment type="subcellular location">
    <subcellularLocation>
        <location evidence="1">Cytoplasm</location>
    </subcellularLocation>
</comment>
<comment type="similarity">
    <text evidence="1">Belongs to the eukaryotic/archaeal RNase P protein component 3 family.</text>
</comment>